<feature type="chain" id="PRO_1000081590" description="HTH-type transcriptional regulator ArgP">
    <location>
        <begin position="1"/>
        <end position="297"/>
    </location>
</feature>
<feature type="domain" description="HTH lysR-type" evidence="1">
    <location>
        <begin position="4"/>
        <end position="60"/>
    </location>
</feature>
<feature type="DNA-binding region" description="H-T-H motif" evidence="1">
    <location>
        <begin position="21"/>
        <end position="40"/>
    </location>
</feature>
<reference key="1">
    <citation type="submission" date="2008-02" db="EMBL/GenBank/DDBJ databases">
        <title>Complete sequence of Escherichia coli C str. ATCC 8739.</title>
        <authorList>
            <person name="Copeland A."/>
            <person name="Lucas S."/>
            <person name="Lapidus A."/>
            <person name="Glavina del Rio T."/>
            <person name="Dalin E."/>
            <person name="Tice H."/>
            <person name="Bruce D."/>
            <person name="Goodwin L."/>
            <person name="Pitluck S."/>
            <person name="Kiss H."/>
            <person name="Brettin T."/>
            <person name="Detter J.C."/>
            <person name="Han C."/>
            <person name="Kuske C.R."/>
            <person name="Schmutz J."/>
            <person name="Larimer F."/>
            <person name="Land M."/>
            <person name="Hauser L."/>
            <person name="Kyrpides N."/>
            <person name="Mikhailova N."/>
            <person name="Ingram L."/>
            <person name="Richardson P."/>
        </authorList>
    </citation>
    <scope>NUCLEOTIDE SEQUENCE [LARGE SCALE GENOMIC DNA]</scope>
    <source>
        <strain>ATCC 8739 / DSM 1576 / NBRC 3972 / NCIMB 8545 / WDCM 00012 / Crooks</strain>
    </source>
</reference>
<protein>
    <recommendedName>
        <fullName evidence="1">HTH-type transcriptional regulator ArgP</fullName>
    </recommendedName>
</protein>
<evidence type="ECO:0000255" key="1">
    <source>
        <dbReference type="HAMAP-Rule" id="MF_00513"/>
    </source>
</evidence>
<evidence type="ECO:0000305" key="2"/>
<gene>
    <name evidence="1" type="primary">argP</name>
    <name type="synonym">iciA</name>
    <name type="ordered locus">EcolC_0794</name>
</gene>
<name>ARGP_ECOLC</name>
<dbReference type="EMBL" id="CP000946">
    <property type="protein sequence ID" value="ACA76466.1"/>
    <property type="molecule type" value="Genomic_DNA"/>
</dbReference>
<dbReference type="RefSeq" id="WP_000828351.1">
    <property type="nucleotide sequence ID" value="NZ_MTFT01000004.1"/>
</dbReference>
<dbReference type="SMR" id="B1IT87"/>
<dbReference type="GeneID" id="93779084"/>
<dbReference type="KEGG" id="ecl:EcolC_0794"/>
<dbReference type="HOGENOM" id="CLU_063829_0_0_6"/>
<dbReference type="GO" id="GO:0003677">
    <property type="term" value="F:DNA binding"/>
    <property type="evidence" value="ECO:0007669"/>
    <property type="project" value="UniProtKB-UniRule"/>
</dbReference>
<dbReference type="GO" id="GO:0003700">
    <property type="term" value="F:DNA-binding transcription factor activity"/>
    <property type="evidence" value="ECO:0007669"/>
    <property type="project" value="UniProtKB-UniRule"/>
</dbReference>
<dbReference type="CDD" id="cd08428">
    <property type="entry name" value="PBP2_IciA_ArgP"/>
    <property type="match status" value="1"/>
</dbReference>
<dbReference type="FunFam" id="1.10.10.10:FF:000061">
    <property type="entry name" value="HTH-type transcriptional regulator ArgP"/>
    <property type="match status" value="1"/>
</dbReference>
<dbReference type="FunFam" id="3.40.190.290:FF:000002">
    <property type="entry name" value="HTH-type transcriptional regulator ArgP"/>
    <property type="match status" value="1"/>
</dbReference>
<dbReference type="Gene3D" id="3.40.190.290">
    <property type="match status" value="1"/>
</dbReference>
<dbReference type="Gene3D" id="1.10.10.10">
    <property type="entry name" value="Winged helix-like DNA-binding domain superfamily/Winged helix DNA-binding domain"/>
    <property type="match status" value="1"/>
</dbReference>
<dbReference type="HAMAP" id="MF_00513">
    <property type="entry name" value="HTH_type_ArgP"/>
    <property type="match status" value="1"/>
</dbReference>
<dbReference type="InterPro" id="IPR017685">
    <property type="entry name" value="ArgP"/>
</dbReference>
<dbReference type="InterPro" id="IPR023490">
    <property type="entry name" value="ArgP_gammaproteobact"/>
</dbReference>
<dbReference type="InterPro" id="IPR050176">
    <property type="entry name" value="LTTR"/>
</dbReference>
<dbReference type="InterPro" id="IPR005119">
    <property type="entry name" value="LysR_subst-bd"/>
</dbReference>
<dbReference type="InterPro" id="IPR000847">
    <property type="entry name" value="Tscrpt_reg_HTH_LysR"/>
</dbReference>
<dbReference type="InterPro" id="IPR036388">
    <property type="entry name" value="WH-like_DNA-bd_sf"/>
</dbReference>
<dbReference type="InterPro" id="IPR036390">
    <property type="entry name" value="WH_DNA-bd_sf"/>
</dbReference>
<dbReference type="NCBIfam" id="TIGR03298">
    <property type="entry name" value="argP"/>
    <property type="match status" value="1"/>
</dbReference>
<dbReference type="NCBIfam" id="NF002964">
    <property type="entry name" value="PRK03635.1"/>
    <property type="match status" value="1"/>
</dbReference>
<dbReference type="NCBIfam" id="NF009888">
    <property type="entry name" value="PRK13348.1"/>
    <property type="match status" value="1"/>
</dbReference>
<dbReference type="PANTHER" id="PTHR30579:SF2">
    <property type="entry name" value="HTH-TYPE TRANSCRIPTIONAL REGULATOR ARGP"/>
    <property type="match status" value="1"/>
</dbReference>
<dbReference type="PANTHER" id="PTHR30579">
    <property type="entry name" value="TRANSCRIPTIONAL REGULATOR"/>
    <property type="match status" value="1"/>
</dbReference>
<dbReference type="Pfam" id="PF00126">
    <property type="entry name" value="HTH_1"/>
    <property type="match status" value="1"/>
</dbReference>
<dbReference type="Pfam" id="PF03466">
    <property type="entry name" value="LysR_substrate"/>
    <property type="match status" value="1"/>
</dbReference>
<dbReference type="PRINTS" id="PR00039">
    <property type="entry name" value="HTHLYSR"/>
</dbReference>
<dbReference type="SUPFAM" id="SSF53850">
    <property type="entry name" value="Periplasmic binding protein-like II"/>
    <property type="match status" value="1"/>
</dbReference>
<dbReference type="SUPFAM" id="SSF46785">
    <property type="entry name" value="Winged helix' DNA-binding domain"/>
    <property type="match status" value="1"/>
</dbReference>
<dbReference type="PROSITE" id="PS50931">
    <property type="entry name" value="HTH_LYSR"/>
    <property type="match status" value="1"/>
</dbReference>
<keyword id="KW-0238">DNA-binding</keyword>
<keyword id="KW-0804">Transcription</keyword>
<keyword id="KW-0805">Transcription regulation</keyword>
<comment type="function">
    <text evidence="1">Controls the transcription of genes involved in arginine and lysine metabolism.</text>
</comment>
<comment type="subunit">
    <text evidence="1">Homodimer.</text>
</comment>
<comment type="similarity">
    <text evidence="2">Belongs to the LysR transcriptional regulatory family.</text>
</comment>
<organism>
    <name type="scientific">Escherichia coli (strain ATCC 8739 / DSM 1576 / NBRC 3972 / NCIMB 8545 / WDCM 00012 / Crooks)</name>
    <dbReference type="NCBI Taxonomy" id="481805"/>
    <lineage>
        <taxon>Bacteria</taxon>
        <taxon>Pseudomonadati</taxon>
        <taxon>Pseudomonadota</taxon>
        <taxon>Gammaproteobacteria</taxon>
        <taxon>Enterobacterales</taxon>
        <taxon>Enterobacteriaceae</taxon>
        <taxon>Escherichia</taxon>
    </lineage>
</organism>
<proteinExistence type="inferred from homology"/>
<sequence>MKRPDYRTLQALDAVIRERGFERAAQKLCITQSAVSQRIKQLENMFGQPLLVRTVPPRPTEQGQKLLALLRQVELLEEEWLGDEQTGSTPLLLSLAVNADSLATWLLPALAPVLADSPIRLNLQVEDETRTQERLRRGEVVGAVSIQHQALPSCLVDKLGALDYLFVSSKPFAEKYFPNGVTRSALLKAPVVAFDHLDDMHQAFLQQNFDLPPGSVPCHIVNSSEAFVQLARQGTTCCMIPHLQIEKELASGELIDLTPGLFQRRMLYWHRFAPESRMMRKVTDALLDYGHKVLRQD</sequence>
<accession>B1IT87</accession>